<evidence type="ECO:0000250" key="1"/>
<evidence type="ECO:0000305" key="2"/>
<sequence>MGNDTLANMITCIRNANLRKTKTVEILATNTNRSIAKILLEEGFIDELRERQEDTKRLLVITLRYQGRKRKPYITTVKQISKAGLRVYSNHKDIPRVLGGMGIVILSTSQGIIIDREARDKQIGGEILCYVW</sequence>
<proteinExistence type="inferred from homology"/>
<accession>Q32RV1</accession>
<gene>
    <name type="primary">rps8</name>
</gene>
<reference key="1">
    <citation type="journal article" date="2005" name="BMC Biol.">
        <title>The complete chloroplast DNA sequences of the charophycean green algae Staurastrum and Zygnema reveal that the chloroplast genome underwent extensive changes during the evolution of the Zygnematales.</title>
        <authorList>
            <person name="Turmel M."/>
            <person name="Otis C."/>
            <person name="Lemieux C."/>
        </authorList>
    </citation>
    <scope>NUCLEOTIDE SEQUENCE [LARGE SCALE GENOMIC DNA]</scope>
</reference>
<geneLocation type="chloroplast"/>
<protein>
    <recommendedName>
        <fullName evidence="2">Small ribosomal subunit protein uS8c</fullName>
    </recommendedName>
    <alternativeName>
        <fullName>30S ribosomal protein S8, chloroplastic</fullName>
    </alternativeName>
</protein>
<name>RR8_STAPU</name>
<feature type="chain" id="PRO_0000225915" description="Small ribosomal subunit protein uS8c">
    <location>
        <begin position="1"/>
        <end position="132"/>
    </location>
</feature>
<comment type="function">
    <text evidence="1">One of the primary rRNA binding proteins, it binds directly to 16S rRNA central domain where it helps coordinate assembly of the platform of the 30S subunit.</text>
</comment>
<comment type="subunit">
    <text evidence="1">Part of the 30S ribosomal subunit.</text>
</comment>
<comment type="subcellular location">
    <subcellularLocation>
        <location>Plastid</location>
        <location>Chloroplast</location>
    </subcellularLocation>
</comment>
<comment type="similarity">
    <text evidence="2">Belongs to the universal ribosomal protein uS8 family.</text>
</comment>
<organism>
    <name type="scientific">Staurastrum punctulatum</name>
    <name type="common">Green alga</name>
    <name type="synonym">Cosmoastrum punctulatum</name>
    <dbReference type="NCBI Taxonomy" id="102822"/>
    <lineage>
        <taxon>Eukaryota</taxon>
        <taxon>Viridiplantae</taxon>
        <taxon>Streptophyta</taxon>
        <taxon>Zygnematophyceae</taxon>
        <taxon>Zygnematophycidae</taxon>
        <taxon>Desmidiales</taxon>
        <taxon>Desmidiaceae</taxon>
        <taxon>Staurastrum</taxon>
    </lineage>
</organism>
<dbReference type="EMBL" id="AY958085">
    <property type="protein sequence ID" value="AAX45761.1"/>
    <property type="molecule type" value="Genomic_DNA"/>
</dbReference>
<dbReference type="RefSeq" id="YP_636425.1">
    <property type="nucleotide sequence ID" value="NC_008116.1"/>
</dbReference>
<dbReference type="SMR" id="Q32RV1"/>
<dbReference type="GeneID" id="4108635"/>
<dbReference type="GO" id="GO:0009507">
    <property type="term" value="C:chloroplast"/>
    <property type="evidence" value="ECO:0007669"/>
    <property type="project" value="UniProtKB-SubCell"/>
</dbReference>
<dbReference type="GO" id="GO:1990904">
    <property type="term" value="C:ribonucleoprotein complex"/>
    <property type="evidence" value="ECO:0007669"/>
    <property type="project" value="UniProtKB-KW"/>
</dbReference>
<dbReference type="GO" id="GO:0005840">
    <property type="term" value="C:ribosome"/>
    <property type="evidence" value="ECO:0007669"/>
    <property type="project" value="UniProtKB-KW"/>
</dbReference>
<dbReference type="GO" id="GO:0019843">
    <property type="term" value="F:rRNA binding"/>
    <property type="evidence" value="ECO:0007669"/>
    <property type="project" value="UniProtKB-UniRule"/>
</dbReference>
<dbReference type="GO" id="GO:0003735">
    <property type="term" value="F:structural constituent of ribosome"/>
    <property type="evidence" value="ECO:0007669"/>
    <property type="project" value="InterPro"/>
</dbReference>
<dbReference type="GO" id="GO:0006412">
    <property type="term" value="P:translation"/>
    <property type="evidence" value="ECO:0007669"/>
    <property type="project" value="UniProtKB-UniRule"/>
</dbReference>
<dbReference type="FunFam" id="3.30.1490.10:FF:000001">
    <property type="entry name" value="30S ribosomal protein S8"/>
    <property type="match status" value="1"/>
</dbReference>
<dbReference type="Gene3D" id="3.30.1370.30">
    <property type="match status" value="1"/>
</dbReference>
<dbReference type="Gene3D" id="3.30.1490.10">
    <property type="match status" value="1"/>
</dbReference>
<dbReference type="HAMAP" id="MF_01302_B">
    <property type="entry name" value="Ribosomal_uS8_B"/>
    <property type="match status" value="1"/>
</dbReference>
<dbReference type="InterPro" id="IPR000630">
    <property type="entry name" value="Ribosomal_uS8"/>
</dbReference>
<dbReference type="InterPro" id="IPR047863">
    <property type="entry name" value="Ribosomal_uS8_CS"/>
</dbReference>
<dbReference type="InterPro" id="IPR035987">
    <property type="entry name" value="Ribosomal_uS8_sf"/>
</dbReference>
<dbReference type="NCBIfam" id="NF001109">
    <property type="entry name" value="PRK00136.1"/>
    <property type="match status" value="1"/>
</dbReference>
<dbReference type="PANTHER" id="PTHR11758">
    <property type="entry name" value="40S RIBOSOMAL PROTEIN S15A"/>
    <property type="match status" value="1"/>
</dbReference>
<dbReference type="Pfam" id="PF00410">
    <property type="entry name" value="Ribosomal_S8"/>
    <property type="match status" value="1"/>
</dbReference>
<dbReference type="SUPFAM" id="SSF56047">
    <property type="entry name" value="Ribosomal protein S8"/>
    <property type="match status" value="1"/>
</dbReference>
<dbReference type="PROSITE" id="PS00053">
    <property type="entry name" value="RIBOSOMAL_S8"/>
    <property type="match status" value="1"/>
</dbReference>
<keyword id="KW-0150">Chloroplast</keyword>
<keyword id="KW-0934">Plastid</keyword>
<keyword id="KW-0687">Ribonucleoprotein</keyword>
<keyword id="KW-0689">Ribosomal protein</keyword>
<keyword id="KW-0694">RNA-binding</keyword>
<keyword id="KW-0699">rRNA-binding</keyword>